<gene>
    <name type="primary">CSLF7</name>
    <name type="ordered locus">Os10g0343400</name>
    <name type="ordered locus">LOC_Os10g20260</name>
    <name type="ORF">OSJNBb0052C09.2</name>
</gene>
<protein>
    <recommendedName>
        <fullName>Probable mixed-linked glucan synthase 7</fullName>
        <ecNumber>2.4.1.-</ecNumber>
    </recommendedName>
    <alternativeName>
        <fullName>1,3;1,4-beta-D-glucan synthase 7</fullName>
    </alternativeName>
    <alternativeName>
        <fullName>Cellulose synthase-like protein F7</fullName>
    </alternativeName>
    <alternativeName>
        <fullName>OsCslF7</fullName>
    </alternativeName>
</protein>
<accession>Q94GM9</accession>
<accession>A0A0P0XT19</accession>
<accession>Q7E0V9</accession>
<accession>Q7XFJ8</accession>
<keyword id="KW-0961">Cell wall biogenesis/degradation</keyword>
<keyword id="KW-0175">Coiled coil</keyword>
<keyword id="KW-0328">Glycosyltransferase</keyword>
<keyword id="KW-0333">Golgi apparatus</keyword>
<keyword id="KW-0472">Membrane</keyword>
<keyword id="KW-1185">Reference proteome</keyword>
<keyword id="KW-0808">Transferase</keyword>
<keyword id="KW-0812">Transmembrane</keyword>
<keyword id="KW-1133">Transmembrane helix</keyword>
<proteinExistence type="evidence at protein level"/>
<organism>
    <name type="scientific">Oryza sativa subsp. japonica</name>
    <name type="common">Rice</name>
    <dbReference type="NCBI Taxonomy" id="39947"/>
    <lineage>
        <taxon>Eukaryota</taxon>
        <taxon>Viridiplantae</taxon>
        <taxon>Streptophyta</taxon>
        <taxon>Embryophyta</taxon>
        <taxon>Tracheophyta</taxon>
        <taxon>Spermatophyta</taxon>
        <taxon>Magnoliopsida</taxon>
        <taxon>Liliopsida</taxon>
        <taxon>Poales</taxon>
        <taxon>Poaceae</taxon>
        <taxon>BOP clade</taxon>
        <taxon>Oryzoideae</taxon>
        <taxon>Oryzeae</taxon>
        <taxon>Oryzinae</taxon>
        <taxon>Oryza</taxon>
        <taxon>Oryza sativa</taxon>
    </lineage>
</organism>
<name>CSLF7_ORYSJ</name>
<comment type="function">
    <text evidence="1">May catalyze both beta-1,3 and beta-1,4 glycosidic linkage on beta-D-glucan. Essential for (1,3;1,4)-beta-D-glucans synthesis in grasses and cereals (Poaceae). The mixed-linked glucans (which are not present in walls of dicotyledons or most other monocotyledonous plants) are particularly important constituents of the walls of the starchy endosperm and aleurone cells of cereal grains such as oats, wheat, rice and barley. They can account for up to 70% by weight of the wall (By similarity).</text>
</comment>
<comment type="subcellular location">
    <subcellularLocation>
        <location evidence="4">Golgi apparatus membrane</location>
        <topology evidence="4">Multi-pass membrane protein</topology>
    </subcellularLocation>
</comment>
<comment type="tissue specificity">
    <text evidence="3">Expressed in mature pollen.</text>
</comment>
<comment type="similarity">
    <text evidence="4">Belongs to the glycosyltransferase 2 family. Plant cellulose synthase-like F subfamily.</text>
</comment>
<evidence type="ECO:0000250" key="1"/>
<evidence type="ECO:0000255" key="2"/>
<evidence type="ECO:0000269" key="3">
    <source>
    </source>
</evidence>
<evidence type="ECO:0000305" key="4"/>
<sequence length="830" mass="89399">MPPSAGLATESLPAATCPAKKDAYAAAASPESETKLAAGDERAPLVRTTRISTTTIKLYRLTIFVRIAIFVLFFKWRITYAARAISSTDAGGIGMSKAATFWTASIAGELWFAFMWVLDQLPKTMPVRRAVDVTALNDDTLLPAMDVFVTTADPDKEPPLATANTVLSILAAGYPAGKVTCYVSDDAGAEVTRGAVVEAARFAALWVPFCRKHGVEPRNPEAYFNGGEGGGGGGKARVVARGSYKGRAWPELVRDRRRVRREYEEMRLRIDALQAADARRRRCGAADDHAGVVQVLIDSAGSAPQLGVADGSKLIDLASVDVRLPALVYVCREKRRGRAHHRKAGAMNALLRASAVLSNAPFILNLDCDHYVNNSQALRAGICFMIERRGGGAEDAGDVAFVQFPQRFDGVDPGDRYANHNRVFFDCTELGLDGLQGPIYVGTGCLFRRVALYGVDPPRWRSPGGGVAADPAKFGESAPFLASVRAEQSHSRDDGDAIAEASALVSCAYEDGTAWGRDVGWVYGTVTEDVATGFCMHRRGWRSAYYAAAPDAFRGTAPINLADRLHQVLRWAAGSLEIFFSRNNALLAGGRRRLHPLQRAAYLNTTVYPFTSLFLMAYCLFPAIPLIAGGGGWNAAPTPTYVAFLAALMVTLAAVAVLETRWSGIALGEWWRNEQFWMVSATSAYLAAVAQVALKVATGKEISFKLTSKHLASSATPVAGKDRQYAELYAVRWTALMAPTAAALAVNVASMAAAGGGGRWWWWDAPSAAAAAAAALPVAFNVWVVVHLYPFALGLMGRRSKAVRPILFLFAVVAYLAVRFLCLLLQFHTA</sequence>
<dbReference type="EC" id="2.4.1.-"/>
<dbReference type="EMBL" id="AC090441">
    <property type="protein sequence ID" value="AAK91320.1"/>
    <property type="molecule type" value="Genomic_DNA"/>
</dbReference>
<dbReference type="EMBL" id="DP000086">
    <property type="protein sequence ID" value="AAP53148.1"/>
    <property type="molecule type" value="Genomic_DNA"/>
</dbReference>
<dbReference type="EMBL" id="AP008216">
    <property type="protein sequence ID" value="BAF26304.1"/>
    <property type="molecule type" value="Genomic_DNA"/>
</dbReference>
<dbReference type="EMBL" id="AP014966">
    <property type="protein sequence ID" value="BAT10422.1"/>
    <property type="molecule type" value="Genomic_DNA"/>
</dbReference>
<dbReference type="EMBL" id="AK110467">
    <property type="status" value="NOT_ANNOTATED_CDS"/>
    <property type="molecule type" value="mRNA"/>
</dbReference>
<dbReference type="EMBL" id="BK000091">
    <property type="protein sequence ID" value="DAA01754.1"/>
    <property type="molecule type" value="Genomic_DNA"/>
</dbReference>
<dbReference type="RefSeq" id="XP_015614348.1">
    <property type="nucleotide sequence ID" value="XM_015758862.1"/>
</dbReference>
<dbReference type="SMR" id="Q94GM9"/>
<dbReference type="FunCoup" id="Q94GM9">
    <property type="interactions" value="9"/>
</dbReference>
<dbReference type="STRING" id="39947.Q94GM9"/>
<dbReference type="CAZy" id="GT2">
    <property type="family name" value="Glycosyltransferase Family 2"/>
</dbReference>
<dbReference type="PaxDb" id="39947-Q94GM9"/>
<dbReference type="EnsemblPlants" id="Os10t0343400-01">
    <property type="protein sequence ID" value="Os10t0343400-01"/>
    <property type="gene ID" value="Os10g0343400"/>
</dbReference>
<dbReference type="Gramene" id="Os10t0343400-01">
    <property type="protein sequence ID" value="Os10t0343400-01"/>
    <property type="gene ID" value="Os10g0343400"/>
</dbReference>
<dbReference type="KEGG" id="dosa:Os10g0343400"/>
<dbReference type="eggNOG" id="ENOG502QU14">
    <property type="taxonomic scope" value="Eukaryota"/>
</dbReference>
<dbReference type="HOGENOM" id="CLU_001418_3_1_1"/>
<dbReference type="InParanoid" id="Q94GM9"/>
<dbReference type="OMA" id="CLFPAIP"/>
<dbReference type="OrthoDB" id="72851at2759"/>
<dbReference type="Proteomes" id="UP000000763">
    <property type="component" value="Chromosome 10"/>
</dbReference>
<dbReference type="Proteomes" id="UP000059680">
    <property type="component" value="Chromosome 10"/>
</dbReference>
<dbReference type="GO" id="GO:0000139">
    <property type="term" value="C:Golgi membrane"/>
    <property type="evidence" value="ECO:0007669"/>
    <property type="project" value="UniProtKB-SubCell"/>
</dbReference>
<dbReference type="GO" id="GO:0005886">
    <property type="term" value="C:plasma membrane"/>
    <property type="evidence" value="ECO:0000318"/>
    <property type="project" value="GO_Central"/>
</dbReference>
<dbReference type="GO" id="GO:0016760">
    <property type="term" value="F:cellulose synthase (UDP-forming) activity"/>
    <property type="evidence" value="ECO:0007669"/>
    <property type="project" value="InterPro"/>
</dbReference>
<dbReference type="GO" id="GO:0071555">
    <property type="term" value="P:cell wall organization"/>
    <property type="evidence" value="ECO:0007669"/>
    <property type="project" value="UniProtKB-KW"/>
</dbReference>
<dbReference type="GO" id="GO:0030244">
    <property type="term" value="P:cellulose biosynthetic process"/>
    <property type="evidence" value="ECO:0007669"/>
    <property type="project" value="InterPro"/>
</dbReference>
<dbReference type="GO" id="GO:0009833">
    <property type="term" value="P:plant-type primary cell wall biogenesis"/>
    <property type="evidence" value="ECO:0000318"/>
    <property type="project" value="GO_Central"/>
</dbReference>
<dbReference type="FunFam" id="3.90.550.10:FF:000156">
    <property type="entry name" value="Cellulose synthase"/>
    <property type="match status" value="1"/>
</dbReference>
<dbReference type="Gene3D" id="3.90.550.10">
    <property type="entry name" value="Spore Coat Polysaccharide Biosynthesis Protein SpsA, Chain A"/>
    <property type="match status" value="1"/>
</dbReference>
<dbReference type="InterPro" id="IPR005150">
    <property type="entry name" value="Cellulose_synth"/>
</dbReference>
<dbReference type="InterPro" id="IPR029044">
    <property type="entry name" value="Nucleotide-diphossugar_trans"/>
</dbReference>
<dbReference type="PANTHER" id="PTHR13301">
    <property type="entry name" value="X-BOX TRANSCRIPTION FACTOR-RELATED"/>
    <property type="match status" value="1"/>
</dbReference>
<dbReference type="Pfam" id="PF03552">
    <property type="entry name" value="Cellulose_synt"/>
    <property type="match status" value="2"/>
</dbReference>
<dbReference type="SUPFAM" id="SSF53448">
    <property type="entry name" value="Nucleotide-diphospho-sugar transferases"/>
    <property type="match status" value="1"/>
</dbReference>
<feature type="chain" id="PRO_0000319407" description="Probable mixed-linked glucan synthase 7">
    <location>
        <begin position="1"/>
        <end position="830"/>
    </location>
</feature>
<feature type="transmembrane region" description="Helical" evidence="2">
    <location>
        <begin position="61"/>
        <end position="81"/>
    </location>
</feature>
<feature type="transmembrane region" description="Helical" evidence="2">
    <location>
        <begin position="98"/>
        <end position="118"/>
    </location>
</feature>
<feature type="transmembrane region" description="Helical" evidence="2">
    <location>
        <begin position="613"/>
        <end position="633"/>
    </location>
</feature>
<feature type="transmembrane region" description="Helical" evidence="2">
    <location>
        <begin position="638"/>
        <end position="658"/>
    </location>
</feature>
<feature type="transmembrane region" description="Helical" evidence="2">
    <location>
        <begin position="676"/>
        <end position="696"/>
    </location>
</feature>
<feature type="transmembrane region" description="Helical" evidence="2">
    <location>
        <begin position="735"/>
        <end position="755"/>
    </location>
</feature>
<feature type="transmembrane region" description="Helical" evidence="2">
    <location>
        <begin position="776"/>
        <end position="796"/>
    </location>
</feature>
<feature type="transmembrane region" description="Helical" evidence="2">
    <location>
        <begin position="805"/>
        <end position="825"/>
    </location>
</feature>
<feature type="coiled-coil region" evidence="2">
    <location>
        <begin position="251"/>
        <end position="279"/>
    </location>
</feature>
<feature type="active site" evidence="2">
    <location>
        <position position="186"/>
    </location>
</feature>
<feature type="active site" evidence="2">
    <location>
        <position position="529"/>
    </location>
</feature>
<feature type="binding site" evidence="2">
    <location>
        <position position="367"/>
    </location>
    <ligand>
        <name>substrate</name>
    </ligand>
</feature>
<feature type="binding site" evidence="2">
    <location>
        <position position="369"/>
    </location>
    <ligand>
        <name>substrate</name>
    </ligand>
</feature>
<feature type="sequence conflict" description="In Ref. 5; AK110467." evidence="4" ref="5">
    <original>M</original>
    <variation>T</variation>
    <location>
        <position position="125"/>
    </location>
</feature>
<feature type="sequence conflict" description="In Ref. 5; AK110467." evidence="4" ref="5">
    <original>P</original>
    <variation>L</variation>
    <location>
        <position position="154"/>
    </location>
</feature>
<feature type="sequence conflict" description="In Ref. 5; AK110467." evidence="4" ref="5">
    <original>A</original>
    <variation>V</variation>
    <location>
        <position position="775"/>
    </location>
</feature>
<feature type="sequence conflict" description="In Ref. 5; AK110467." evidence="4" ref="5">
    <original>T</original>
    <variation>M</variation>
    <location>
        <position position="829"/>
    </location>
</feature>
<reference key="1">
    <citation type="journal article" date="2003" name="Science">
        <title>In-depth view of structure, activity, and evolution of rice chromosome 10.</title>
        <authorList>
            <person name="Yu Y."/>
            <person name="Rambo T."/>
            <person name="Currie J."/>
            <person name="Saski C."/>
            <person name="Kim H.-R."/>
            <person name="Collura K."/>
            <person name="Thompson S."/>
            <person name="Simmons J."/>
            <person name="Yang T.-J."/>
            <person name="Nah G."/>
            <person name="Patel A.J."/>
            <person name="Thurmond S."/>
            <person name="Henry D."/>
            <person name="Oates R."/>
            <person name="Palmer M."/>
            <person name="Pries G."/>
            <person name="Gibson J."/>
            <person name="Anderson H."/>
            <person name="Paradkar M."/>
            <person name="Crane L."/>
            <person name="Dale J."/>
            <person name="Carver M.B."/>
            <person name="Wood T."/>
            <person name="Frisch D."/>
            <person name="Engler F."/>
            <person name="Soderlund C."/>
            <person name="Palmer L.E."/>
            <person name="Teytelman L."/>
            <person name="Nascimento L."/>
            <person name="De la Bastide M."/>
            <person name="Spiegel L."/>
            <person name="Ware D."/>
            <person name="O'Shaughnessy A."/>
            <person name="Dike S."/>
            <person name="Dedhia N."/>
            <person name="Preston R."/>
            <person name="Huang E."/>
            <person name="Ferraro K."/>
            <person name="Kuit K."/>
            <person name="Miller B."/>
            <person name="Zutavern T."/>
            <person name="Katzenberger F."/>
            <person name="Muller S."/>
            <person name="Balija V."/>
            <person name="Martienssen R.A."/>
            <person name="Stein L."/>
            <person name="Minx P."/>
            <person name="Johnson D."/>
            <person name="Cordum H."/>
            <person name="Mardis E."/>
            <person name="Cheng Z."/>
            <person name="Jiang J."/>
            <person name="Wilson R."/>
            <person name="McCombie W.R."/>
            <person name="Wing R.A."/>
            <person name="Yuan Q."/>
            <person name="Ouyang S."/>
            <person name="Liu J."/>
            <person name="Jones K.M."/>
            <person name="Gansberger K."/>
            <person name="Moffat K."/>
            <person name="Hill J."/>
            <person name="Tsitrin T."/>
            <person name="Overton L."/>
            <person name="Bera J."/>
            <person name="Kim M."/>
            <person name="Jin S."/>
            <person name="Tallon L."/>
            <person name="Ciecko A."/>
            <person name="Pai G."/>
            <person name="Van Aken S."/>
            <person name="Utterback T."/>
            <person name="Reidmuller S."/>
            <person name="Bormann J."/>
            <person name="Feldblyum T."/>
            <person name="Hsiao J."/>
            <person name="Zismann V."/>
            <person name="Blunt S."/>
            <person name="de Vazeille A.R."/>
            <person name="Shaffer T."/>
            <person name="Koo H."/>
            <person name="Suh B."/>
            <person name="Yang Q."/>
            <person name="Haas B."/>
            <person name="Peterson J."/>
            <person name="Pertea M."/>
            <person name="Volfovsky N."/>
            <person name="Wortman J."/>
            <person name="White O."/>
            <person name="Salzberg S.L."/>
            <person name="Fraser C.M."/>
            <person name="Buell C.R."/>
            <person name="Messing J."/>
            <person name="Song R."/>
            <person name="Fuks G."/>
            <person name="Llaca V."/>
            <person name="Kovchak S."/>
            <person name="Young S."/>
            <person name="Bowers J.E."/>
            <person name="Paterson A.H."/>
            <person name="Johns M.A."/>
            <person name="Mao L."/>
            <person name="Pan H."/>
            <person name="Dean R.A."/>
        </authorList>
    </citation>
    <scope>NUCLEOTIDE SEQUENCE [LARGE SCALE GENOMIC DNA]</scope>
    <source>
        <strain>cv. Nipponbare</strain>
    </source>
</reference>
<reference key="2">
    <citation type="journal article" date="2005" name="Nature">
        <title>The map-based sequence of the rice genome.</title>
        <authorList>
            <consortium name="International rice genome sequencing project (IRGSP)"/>
        </authorList>
    </citation>
    <scope>NUCLEOTIDE SEQUENCE [LARGE SCALE GENOMIC DNA]</scope>
    <source>
        <strain>cv. Nipponbare</strain>
    </source>
</reference>
<reference key="3">
    <citation type="journal article" date="2008" name="Nucleic Acids Res.">
        <title>The rice annotation project database (RAP-DB): 2008 update.</title>
        <authorList>
            <consortium name="The rice annotation project (RAP)"/>
        </authorList>
    </citation>
    <scope>GENOME REANNOTATION</scope>
    <source>
        <strain>cv. Nipponbare</strain>
    </source>
</reference>
<reference key="4">
    <citation type="journal article" date="2013" name="Rice">
        <title>Improvement of the Oryza sativa Nipponbare reference genome using next generation sequence and optical map data.</title>
        <authorList>
            <person name="Kawahara Y."/>
            <person name="de la Bastide M."/>
            <person name="Hamilton J.P."/>
            <person name="Kanamori H."/>
            <person name="McCombie W.R."/>
            <person name="Ouyang S."/>
            <person name="Schwartz D.C."/>
            <person name="Tanaka T."/>
            <person name="Wu J."/>
            <person name="Zhou S."/>
            <person name="Childs K.L."/>
            <person name="Davidson R.M."/>
            <person name="Lin H."/>
            <person name="Quesada-Ocampo L."/>
            <person name="Vaillancourt B."/>
            <person name="Sakai H."/>
            <person name="Lee S.S."/>
            <person name="Kim J."/>
            <person name="Numa H."/>
            <person name="Itoh T."/>
            <person name="Buell C.R."/>
            <person name="Matsumoto T."/>
        </authorList>
    </citation>
    <scope>GENOME REANNOTATION</scope>
    <source>
        <strain>cv. Nipponbare</strain>
    </source>
</reference>
<reference key="5">
    <citation type="journal article" date="2003" name="Science">
        <title>Collection, mapping, and annotation of over 28,000 cDNA clones from japonica rice.</title>
        <authorList>
            <consortium name="The rice full-length cDNA consortium"/>
        </authorList>
    </citation>
    <scope>NUCLEOTIDE SEQUENCE [LARGE SCALE MRNA]</scope>
    <source>
        <strain>cv. Nipponbare</strain>
    </source>
</reference>
<reference key="6">
    <citation type="journal article" date="2002" name="Plant Physiol.">
        <title>Cellulose synthase-like genes of rice.</title>
        <authorList>
            <person name="Hazen S.P."/>
            <person name="Scott-Craig J.S."/>
            <person name="Walton J.D."/>
        </authorList>
    </citation>
    <scope>IDENTIFICATION</scope>
</reference>
<reference key="7">
    <citation type="journal article" date="2006" name="Proteomics">
        <title>Proteomic analyses of Oryza sativa mature pollen reveal novel proteins associated with pollen germination and tube growth.</title>
        <authorList>
            <person name="Dai S."/>
            <person name="Li L."/>
            <person name="Chen T."/>
            <person name="Chong K."/>
            <person name="Xue Y."/>
            <person name="Wang T."/>
        </authorList>
    </citation>
    <scope>IDENTIFICATION BY MASS SPECTROMETRY</scope>
    <scope>TISSUE SPECIFICITY</scope>
    <source>
        <strain>cv. Zhonghua 10</strain>
        <tissue>Pollen</tissue>
    </source>
</reference>